<comment type="function">
    <text evidence="1">Catalyzes the attachment of alanine to tRNA(Ala) in a two-step reaction: alanine is first activated by ATP to form Ala-AMP and then transferred to the acceptor end of tRNA(Ala). Also edits incorrectly charged Ser-tRNA(Ala) and Gly-tRNA(Ala) via its editing domain.</text>
</comment>
<comment type="catalytic activity">
    <reaction evidence="1">
        <text>tRNA(Ala) + L-alanine + ATP = L-alanyl-tRNA(Ala) + AMP + diphosphate</text>
        <dbReference type="Rhea" id="RHEA:12540"/>
        <dbReference type="Rhea" id="RHEA-COMP:9657"/>
        <dbReference type="Rhea" id="RHEA-COMP:9923"/>
        <dbReference type="ChEBI" id="CHEBI:30616"/>
        <dbReference type="ChEBI" id="CHEBI:33019"/>
        <dbReference type="ChEBI" id="CHEBI:57972"/>
        <dbReference type="ChEBI" id="CHEBI:78442"/>
        <dbReference type="ChEBI" id="CHEBI:78497"/>
        <dbReference type="ChEBI" id="CHEBI:456215"/>
        <dbReference type="EC" id="6.1.1.7"/>
    </reaction>
</comment>
<comment type="cofactor">
    <cofactor evidence="1">
        <name>Zn(2+)</name>
        <dbReference type="ChEBI" id="CHEBI:29105"/>
    </cofactor>
    <text evidence="1">Binds 1 zinc ion per subunit.</text>
</comment>
<comment type="subcellular location">
    <subcellularLocation>
        <location evidence="1">Cytoplasm</location>
    </subcellularLocation>
</comment>
<comment type="domain">
    <text evidence="1">Consists of three domains; the N-terminal catalytic domain, the editing domain and the C-terminal C-Ala domain. The editing domain removes incorrectly charged amino acids, while the C-Ala domain, along with tRNA(Ala), serves as a bridge to cooperatively bring together the editing and aminoacylation centers thus stimulating deacylation of misacylated tRNAs.</text>
</comment>
<comment type="similarity">
    <text evidence="1">Belongs to the class-II aminoacyl-tRNA synthetase family.</text>
</comment>
<feature type="chain" id="PRO_0000075267" description="Alanine--tRNA ligase">
    <location>
        <begin position="1"/>
        <end position="892"/>
    </location>
</feature>
<feature type="binding site" evidence="1">
    <location>
        <position position="596"/>
    </location>
    <ligand>
        <name>Zn(2+)</name>
        <dbReference type="ChEBI" id="CHEBI:29105"/>
    </ligand>
</feature>
<feature type="binding site" evidence="1">
    <location>
        <position position="600"/>
    </location>
    <ligand>
        <name>Zn(2+)</name>
        <dbReference type="ChEBI" id="CHEBI:29105"/>
    </ligand>
</feature>
<feature type="binding site" evidence="1">
    <location>
        <position position="700"/>
    </location>
    <ligand>
        <name>Zn(2+)</name>
        <dbReference type="ChEBI" id="CHEBI:29105"/>
    </ligand>
</feature>
<feature type="binding site" evidence="1">
    <location>
        <position position="704"/>
    </location>
    <ligand>
        <name>Zn(2+)</name>
        <dbReference type="ChEBI" id="CHEBI:29105"/>
    </ligand>
</feature>
<proteinExistence type="inferred from homology"/>
<keyword id="KW-0030">Aminoacyl-tRNA synthetase</keyword>
<keyword id="KW-0067">ATP-binding</keyword>
<keyword id="KW-0963">Cytoplasm</keyword>
<keyword id="KW-0436">Ligase</keyword>
<keyword id="KW-0479">Metal-binding</keyword>
<keyword id="KW-0547">Nucleotide-binding</keyword>
<keyword id="KW-0648">Protein biosynthesis</keyword>
<keyword id="KW-1185">Reference proteome</keyword>
<keyword id="KW-0694">RNA-binding</keyword>
<keyword id="KW-0820">tRNA-binding</keyword>
<keyword id="KW-0862">Zinc</keyword>
<evidence type="ECO:0000255" key="1">
    <source>
        <dbReference type="HAMAP-Rule" id="MF_00036"/>
    </source>
</evidence>
<name>SYA_METMP</name>
<reference key="1">
    <citation type="journal article" date="2004" name="J. Bacteriol.">
        <title>Complete genome sequence of the genetically tractable hydrogenotrophic methanogen Methanococcus maripaludis.</title>
        <authorList>
            <person name="Hendrickson E.L."/>
            <person name="Kaul R."/>
            <person name="Zhou Y."/>
            <person name="Bovee D."/>
            <person name="Chapman P."/>
            <person name="Chung J."/>
            <person name="Conway de Macario E."/>
            <person name="Dodsworth J.A."/>
            <person name="Gillett W."/>
            <person name="Graham D.E."/>
            <person name="Hackett M."/>
            <person name="Haydock A.K."/>
            <person name="Kang A."/>
            <person name="Land M.L."/>
            <person name="Levy R."/>
            <person name="Lie T.J."/>
            <person name="Major T.A."/>
            <person name="Moore B.C."/>
            <person name="Porat I."/>
            <person name="Palmeiri A."/>
            <person name="Rouse G."/>
            <person name="Saenphimmachak C."/>
            <person name="Soell D."/>
            <person name="Van Dien S."/>
            <person name="Wang T."/>
            <person name="Whitman W.B."/>
            <person name="Xia Q."/>
            <person name="Zhang Y."/>
            <person name="Larimer F.W."/>
            <person name="Olson M.V."/>
            <person name="Leigh J.A."/>
        </authorList>
    </citation>
    <scope>NUCLEOTIDE SEQUENCE [LARGE SCALE GENOMIC DNA]</scope>
    <source>
        <strain>DSM 14266 / JCM 13030 / NBRC 101832 / S2 / LL</strain>
    </source>
</reference>
<protein>
    <recommendedName>
        <fullName evidence="1">Alanine--tRNA ligase</fullName>
        <ecNumber evidence="1">6.1.1.7</ecNumber>
    </recommendedName>
    <alternativeName>
        <fullName evidence="1">Alanyl-tRNA synthetase</fullName>
        <shortName evidence="1">AlaRS</shortName>
    </alternativeName>
</protein>
<gene>
    <name evidence="1" type="primary">alaS</name>
    <name type="ordered locus">MMP0397</name>
</gene>
<organism>
    <name type="scientific">Methanococcus maripaludis (strain DSM 14266 / JCM 13030 / NBRC 101832 / S2 / LL)</name>
    <dbReference type="NCBI Taxonomy" id="267377"/>
    <lineage>
        <taxon>Archaea</taxon>
        <taxon>Methanobacteriati</taxon>
        <taxon>Methanobacteriota</taxon>
        <taxon>Methanomada group</taxon>
        <taxon>Methanococci</taxon>
        <taxon>Methanococcales</taxon>
        <taxon>Methanococcaceae</taxon>
        <taxon>Methanococcus</taxon>
    </lineage>
</organism>
<dbReference type="EC" id="6.1.1.7" evidence="1"/>
<dbReference type="EMBL" id="BX950229">
    <property type="protein sequence ID" value="CAF29953.1"/>
    <property type="molecule type" value="Genomic_DNA"/>
</dbReference>
<dbReference type="RefSeq" id="WP_011170341.1">
    <property type="nucleotide sequence ID" value="NC_005791.1"/>
</dbReference>
<dbReference type="SMR" id="P61710"/>
<dbReference type="STRING" id="267377.MMP0397"/>
<dbReference type="EnsemblBacteria" id="CAF29953">
    <property type="protein sequence ID" value="CAF29953"/>
    <property type="gene ID" value="MMP0397"/>
</dbReference>
<dbReference type="GeneID" id="2761467"/>
<dbReference type="KEGG" id="mmp:MMP0397"/>
<dbReference type="PATRIC" id="fig|267377.15.peg.401"/>
<dbReference type="eggNOG" id="arCOG01255">
    <property type="taxonomic scope" value="Archaea"/>
</dbReference>
<dbReference type="HOGENOM" id="CLU_004485_4_0_2"/>
<dbReference type="OrthoDB" id="7506at2157"/>
<dbReference type="Proteomes" id="UP000000590">
    <property type="component" value="Chromosome"/>
</dbReference>
<dbReference type="GO" id="GO:0005737">
    <property type="term" value="C:cytoplasm"/>
    <property type="evidence" value="ECO:0007669"/>
    <property type="project" value="UniProtKB-SubCell"/>
</dbReference>
<dbReference type="GO" id="GO:0004813">
    <property type="term" value="F:alanine-tRNA ligase activity"/>
    <property type="evidence" value="ECO:0007669"/>
    <property type="project" value="UniProtKB-UniRule"/>
</dbReference>
<dbReference type="GO" id="GO:0002161">
    <property type="term" value="F:aminoacyl-tRNA deacylase activity"/>
    <property type="evidence" value="ECO:0007669"/>
    <property type="project" value="TreeGrafter"/>
</dbReference>
<dbReference type="GO" id="GO:0005524">
    <property type="term" value="F:ATP binding"/>
    <property type="evidence" value="ECO:0007669"/>
    <property type="project" value="UniProtKB-UniRule"/>
</dbReference>
<dbReference type="GO" id="GO:0000049">
    <property type="term" value="F:tRNA binding"/>
    <property type="evidence" value="ECO:0007669"/>
    <property type="project" value="UniProtKB-KW"/>
</dbReference>
<dbReference type="GO" id="GO:0008270">
    <property type="term" value="F:zinc ion binding"/>
    <property type="evidence" value="ECO:0007669"/>
    <property type="project" value="UniProtKB-UniRule"/>
</dbReference>
<dbReference type="GO" id="GO:0006419">
    <property type="term" value="P:alanyl-tRNA aminoacylation"/>
    <property type="evidence" value="ECO:0007669"/>
    <property type="project" value="UniProtKB-UniRule"/>
</dbReference>
<dbReference type="CDD" id="cd00673">
    <property type="entry name" value="AlaRS_core"/>
    <property type="match status" value="1"/>
</dbReference>
<dbReference type="FunFam" id="3.30.54.20:FF:000004">
    <property type="entry name" value="Alanine--tRNA ligase"/>
    <property type="match status" value="1"/>
</dbReference>
<dbReference type="FunFam" id="3.30.930.10:FF:000056">
    <property type="entry name" value="Alanine--tRNA ligase"/>
    <property type="match status" value="1"/>
</dbReference>
<dbReference type="FunFam" id="3.30.980.10:FF:000004">
    <property type="entry name" value="Alanine--tRNA ligase, cytoplasmic"/>
    <property type="match status" value="1"/>
</dbReference>
<dbReference type="Gene3D" id="2.40.30.130">
    <property type="match status" value="1"/>
</dbReference>
<dbReference type="Gene3D" id="3.10.310.40">
    <property type="match status" value="1"/>
</dbReference>
<dbReference type="Gene3D" id="3.30.54.20">
    <property type="match status" value="1"/>
</dbReference>
<dbReference type="Gene3D" id="6.10.250.550">
    <property type="match status" value="1"/>
</dbReference>
<dbReference type="Gene3D" id="3.30.930.10">
    <property type="entry name" value="Bira Bifunctional Protein, Domain 2"/>
    <property type="match status" value="1"/>
</dbReference>
<dbReference type="Gene3D" id="3.30.980.10">
    <property type="entry name" value="Threonyl-trna Synthetase, Chain A, domain 2"/>
    <property type="match status" value="1"/>
</dbReference>
<dbReference type="HAMAP" id="MF_00036_A">
    <property type="entry name" value="Ala_tRNA_synth_A"/>
    <property type="match status" value="1"/>
</dbReference>
<dbReference type="InterPro" id="IPR045864">
    <property type="entry name" value="aa-tRNA-synth_II/BPL/LPL"/>
</dbReference>
<dbReference type="InterPro" id="IPR002318">
    <property type="entry name" value="Ala-tRNA-lgiase_IIc"/>
</dbReference>
<dbReference type="InterPro" id="IPR018162">
    <property type="entry name" value="Ala-tRNA-ligase_IIc_anticod-bd"/>
</dbReference>
<dbReference type="InterPro" id="IPR018165">
    <property type="entry name" value="Ala-tRNA-synth_IIc_core"/>
</dbReference>
<dbReference type="InterPro" id="IPR018164">
    <property type="entry name" value="Ala-tRNA-synth_IIc_N"/>
</dbReference>
<dbReference type="InterPro" id="IPR022429">
    <property type="entry name" value="Ala-tRNA_lgiase_arc"/>
</dbReference>
<dbReference type="InterPro" id="IPR050058">
    <property type="entry name" value="Ala-tRNA_ligase"/>
</dbReference>
<dbReference type="InterPro" id="IPR018163">
    <property type="entry name" value="Thr/Ala-tRNA-synth_IIc_edit"/>
</dbReference>
<dbReference type="InterPro" id="IPR009000">
    <property type="entry name" value="Transl_B-barrel_sf"/>
</dbReference>
<dbReference type="InterPro" id="IPR012947">
    <property type="entry name" value="tRNA_SAD"/>
</dbReference>
<dbReference type="NCBIfam" id="TIGR03683">
    <property type="entry name" value="A-tRNA_syn_arch"/>
    <property type="match status" value="1"/>
</dbReference>
<dbReference type="NCBIfam" id="TIGR00344">
    <property type="entry name" value="alaS"/>
    <property type="match status" value="1"/>
</dbReference>
<dbReference type="PANTHER" id="PTHR11777:SF9">
    <property type="entry name" value="ALANINE--TRNA LIGASE, CYTOPLASMIC"/>
    <property type="match status" value="1"/>
</dbReference>
<dbReference type="PANTHER" id="PTHR11777">
    <property type="entry name" value="ALANYL-TRNA SYNTHETASE"/>
    <property type="match status" value="1"/>
</dbReference>
<dbReference type="Pfam" id="PF01411">
    <property type="entry name" value="tRNA-synt_2c"/>
    <property type="match status" value="1"/>
</dbReference>
<dbReference type="Pfam" id="PF07973">
    <property type="entry name" value="tRNA_SAD"/>
    <property type="match status" value="1"/>
</dbReference>
<dbReference type="PRINTS" id="PR00980">
    <property type="entry name" value="TRNASYNTHALA"/>
</dbReference>
<dbReference type="SMART" id="SM00863">
    <property type="entry name" value="tRNA_SAD"/>
    <property type="match status" value="1"/>
</dbReference>
<dbReference type="SUPFAM" id="SSF55681">
    <property type="entry name" value="Class II aaRS and biotin synthetases"/>
    <property type="match status" value="1"/>
</dbReference>
<dbReference type="SUPFAM" id="SSF101353">
    <property type="entry name" value="Putative anticodon-binding domain of alanyl-tRNA synthetase (AlaRS)"/>
    <property type="match status" value="1"/>
</dbReference>
<dbReference type="SUPFAM" id="SSF55186">
    <property type="entry name" value="ThrRS/AlaRS common domain"/>
    <property type="match status" value="1"/>
</dbReference>
<dbReference type="SUPFAM" id="SSF50447">
    <property type="entry name" value="Translation proteins"/>
    <property type="match status" value="1"/>
</dbReference>
<dbReference type="PROSITE" id="PS50860">
    <property type="entry name" value="AA_TRNA_LIGASE_II_ALA"/>
    <property type="match status" value="1"/>
</dbReference>
<sequence>MEINHDYRVKLFDELGFERKQCTECNQWFWTLDKDRTTCGDSPCDEYSFIGNPITSKKYTYNEMVKEFTNFFDEKGHTPVKRSPVVAKRWRDDILLTIASIAVFQPWVTSGLVKPVKNPLVIAQPCIRLNDIDNVGRTGRHLTCFTMGAHHAFNSKDDYKYWTDKTVEYCFELMQRLGIDGKTITFIESWWEGGGNAGPCYEVITHGVELATLVFMQYKKIGNDYEEIPLKIVDTGYGIERFAWASQGTPTVYESLFSEIIEKLKEDAGIPEVDEKIMAESATLAGLMDIENVGDLRVLRQKVAEKIGMDVDELDKLISPLEYIYAIADHTRCLSFMFGDGIVPSNVKEGYLARLVLRKTLRYMEKIGISMSIKDIISMQLENMKEIYPELSAMKEYIMDVLDAEEKKYIQTVNRGRGIVERMAASKSEITLDDLIELYDSNGLPPEIVKDVVDDLNKKGKKTIAITVPDNFYTIVAERHEEEKPEEVVSTKKELPELEVSKTELLFFKHPTQVEFEAKVLKIVEKYVVLDKTLFYAEGGGQKYDIGQLNDIEVMDVQKKNGIVFHKVSDISKFKEGDTVKGAVNWDNRLKLMRNHTATHVINAAATRVLGKHVWQTGSNVDTEKGRLDITHYERISREQVKEIERIANEIVLSKMPVNSTFMDRNDAEQKYGFTIYQGGVVPGDTLRIIEIEGTDVEACGGTHCSNTSECGYIKVLKTERIQDGVERLEYSTGMGSVSEIASLEDTLIDSAEILGIPNDQLPKTVKRFFEEWKEQKKTIEELQKKVGELVKYELADKFENVGNYEVLVEQVSGTPNELMSIADNLAVGNKLIVLMNENDYLLCKRGENVELSMKDLIRNIGKGGGKDNLAQGKYSENKEQITEKIIQILNK</sequence>
<accession>P61710</accession>